<evidence type="ECO:0000255" key="1">
    <source>
        <dbReference type="HAMAP-Rule" id="MF_01396"/>
    </source>
</evidence>
<dbReference type="EMBL" id="DQ821119">
    <property type="protein sequence ID" value="ABG79586.1"/>
    <property type="molecule type" value="Genomic_DNA"/>
</dbReference>
<dbReference type="RefSeq" id="YP_001023687.1">
    <property type="nucleotide sequence ID" value="NC_008829.1"/>
</dbReference>
<dbReference type="SMR" id="A2T319"/>
<dbReference type="GeneID" id="4788195"/>
<dbReference type="GO" id="GO:0009535">
    <property type="term" value="C:chloroplast thylakoid membrane"/>
    <property type="evidence" value="ECO:0007669"/>
    <property type="project" value="UniProtKB-SubCell"/>
</dbReference>
<dbReference type="GO" id="GO:0045259">
    <property type="term" value="C:proton-transporting ATP synthase complex"/>
    <property type="evidence" value="ECO:0007669"/>
    <property type="project" value="UniProtKB-KW"/>
</dbReference>
<dbReference type="GO" id="GO:0033177">
    <property type="term" value="C:proton-transporting two-sector ATPase complex, proton-transporting domain"/>
    <property type="evidence" value="ECO:0007669"/>
    <property type="project" value="InterPro"/>
</dbReference>
<dbReference type="GO" id="GO:0008289">
    <property type="term" value="F:lipid binding"/>
    <property type="evidence" value="ECO:0007669"/>
    <property type="project" value="UniProtKB-KW"/>
</dbReference>
<dbReference type="GO" id="GO:0046933">
    <property type="term" value="F:proton-transporting ATP synthase activity, rotational mechanism"/>
    <property type="evidence" value="ECO:0007669"/>
    <property type="project" value="UniProtKB-UniRule"/>
</dbReference>
<dbReference type="CDD" id="cd18183">
    <property type="entry name" value="ATP-synt_Fo_c_ATPH"/>
    <property type="match status" value="1"/>
</dbReference>
<dbReference type="FunFam" id="1.20.20.10:FF:000001">
    <property type="entry name" value="ATP synthase subunit c, chloroplastic"/>
    <property type="match status" value="1"/>
</dbReference>
<dbReference type="Gene3D" id="1.20.20.10">
    <property type="entry name" value="F1F0 ATP synthase subunit C"/>
    <property type="match status" value="1"/>
</dbReference>
<dbReference type="HAMAP" id="MF_01396">
    <property type="entry name" value="ATP_synth_c_bact"/>
    <property type="match status" value="1"/>
</dbReference>
<dbReference type="InterPro" id="IPR005953">
    <property type="entry name" value="ATP_synth_csu_bac/chlpt"/>
</dbReference>
<dbReference type="InterPro" id="IPR000454">
    <property type="entry name" value="ATP_synth_F0_csu"/>
</dbReference>
<dbReference type="InterPro" id="IPR020537">
    <property type="entry name" value="ATP_synth_F0_csu_DDCD_BS"/>
</dbReference>
<dbReference type="InterPro" id="IPR038662">
    <property type="entry name" value="ATP_synth_F0_csu_sf"/>
</dbReference>
<dbReference type="InterPro" id="IPR002379">
    <property type="entry name" value="ATPase_proteolipid_c-like_dom"/>
</dbReference>
<dbReference type="InterPro" id="IPR035921">
    <property type="entry name" value="F/V-ATP_Csub_sf"/>
</dbReference>
<dbReference type="NCBIfam" id="TIGR01260">
    <property type="entry name" value="ATP_synt_c"/>
    <property type="match status" value="1"/>
</dbReference>
<dbReference type="NCBIfam" id="NF005608">
    <property type="entry name" value="PRK07354.1"/>
    <property type="match status" value="1"/>
</dbReference>
<dbReference type="PANTHER" id="PTHR10031">
    <property type="entry name" value="ATP SYNTHASE LIPID-BINDING PROTEIN, MITOCHONDRIAL"/>
    <property type="match status" value="1"/>
</dbReference>
<dbReference type="PANTHER" id="PTHR10031:SF0">
    <property type="entry name" value="ATPASE PROTEIN 9"/>
    <property type="match status" value="1"/>
</dbReference>
<dbReference type="Pfam" id="PF00137">
    <property type="entry name" value="ATP-synt_C"/>
    <property type="match status" value="1"/>
</dbReference>
<dbReference type="PRINTS" id="PR00124">
    <property type="entry name" value="ATPASEC"/>
</dbReference>
<dbReference type="SUPFAM" id="SSF81333">
    <property type="entry name" value="F1F0 ATP synthase subunit C"/>
    <property type="match status" value="1"/>
</dbReference>
<dbReference type="PROSITE" id="PS00605">
    <property type="entry name" value="ATPASE_C"/>
    <property type="match status" value="1"/>
</dbReference>
<accession>A2T319</accession>
<sequence length="81" mass="7964">MNPLISAASVIAAGLAVGLASIGPGVGQGTAAGQAVEGIARQPEAEGKIRGTLLLSLAFMEALTIYGLVVALALSFANPFV</sequence>
<proteinExistence type="inferred from homology"/>
<feature type="chain" id="PRO_0000362886" description="ATP synthase subunit c, chloroplastic">
    <location>
        <begin position="1"/>
        <end position="81"/>
    </location>
</feature>
<feature type="transmembrane region" description="Helical" evidence="1">
    <location>
        <begin position="3"/>
        <end position="23"/>
    </location>
</feature>
<feature type="transmembrane region" description="Helical" evidence="1">
    <location>
        <begin position="53"/>
        <end position="73"/>
    </location>
</feature>
<feature type="site" description="Reversibly protonated during proton transport" evidence="1">
    <location>
        <position position="61"/>
    </location>
</feature>
<keyword id="KW-0066">ATP synthesis</keyword>
<keyword id="KW-0138">CF(0)</keyword>
<keyword id="KW-0150">Chloroplast</keyword>
<keyword id="KW-0375">Hydrogen ion transport</keyword>
<keyword id="KW-0406">Ion transport</keyword>
<keyword id="KW-0446">Lipid-binding</keyword>
<keyword id="KW-0472">Membrane</keyword>
<keyword id="KW-0934">Plastid</keyword>
<keyword id="KW-0793">Thylakoid</keyword>
<keyword id="KW-0812">Transmembrane</keyword>
<keyword id="KW-1133">Transmembrane helix</keyword>
<keyword id="KW-0813">Transport</keyword>
<name>ATPH_ANGEV</name>
<comment type="function">
    <text evidence="1">F(1)F(0) ATP synthase produces ATP from ADP in the presence of a proton or sodium gradient. F-type ATPases consist of two structural domains, F(1) containing the extramembraneous catalytic core and F(0) containing the membrane proton channel, linked together by a central stalk and a peripheral stalk. During catalysis, ATP synthesis in the catalytic domain of F(1) is coupled via a rotary mechanism of the central stalk subunits to proton translocation.</text>
</comment>
<comment type="function">
    <text evidence="1">Key component of the F(0) channel; it plays a direct role in translocation across the membrane. A homomeric c-ring of between 10-14 subunits forms the central stalk rotor element with the F(1) delta and epsilon subunits.</text>
</comment>
<comment type="subunit">
    <text evidence="1">F-type ATPases have 2 components, F(1) - the catalytic core - and F(0) - the membrane proton channel. F(1) has five subunits: alpha(3), beta(3), gamma(1), delta(1), epsilon(1). F(0) has four main subunits: a(1), b(1), b'(1) and c(10-14). The alpha and beta chains form an alternating ring which encloses part of the gamma chain. F(1) is attached to F(0) by a central stalk formed by the gamma and epsilon chains, while a peripheral stalk is formed by the delta, b and b' chains.</text>
</comment>
<comment type="subcellular location">
    <subcellularLocation>
        <location evidence="1">Plastid</location>
        <location evidence="1">Chloroplast thylakoid membrane</location>
        <topology evidence="1">Multi-pass membrane protein</topology>
    </subcellularLocation>
</comment>
<comment type="miscellaneous">
    <text>In plastids the F-type ATPase is also known as CF(1)CF(0).</text>
</comment>
<comment type="similarity">
    <text evidence="1">Belongs to the ATPase C chain family.</text>
</comment>
<protein>
    <recommendedName>
        <fullName evidence="1">ATP synthase subunit c, chloroplastic</fullName>
    </recommendedName>
    <alternativeName>
        <fullName evidence="1">ATP synthase F(0) sector subunit c</fullName>
    </alternativeName>
    <alternativeName>
        <fullName evidence="1">ATPase subunit III</fullName>
    </alternativeName>
    <alternativeName>
        <fullName evidence="1">F-type ATPase subunit c</fullName>
        <shortName evidence="1">F-ATPase subunit c</shortName>
    </alternativeName>
    <alternativeName>
        <fullName evidence="1">Lipid-binding protein</fullName>
    </alternativeName>
</protein>
<geneLocation type="chloroplast"/>
<reference key="1">
    <citation type="journal article" date="2007" name="Am. Fern J.">
        <title>The complete plastid genome sequence of Angiopteris evecta (G. Forst.) Hoffm. (Marattiaceae).</title>
        <authorList>
            <person name="Roper J.M."/>
            <person name="Hansen S.K."/>
            <person name="Wolf P.G."/>
            <person name="Karol K.G."/>
            <person name="Mandoli D.F."/>
            <person name="Everett K.D.E."/>
            <person name="Kuehl J."/>
            <person name="Boore J.L."/>
        </authorList>
    </citation>
    <scope>NUCLEOTIDE SEQUENCE [LARGE SCALE GENOMIC DNA]</scope>
</reference>
<gene>
    <name evidence="1" type="primary">atpH</name>
</gene>
<organism>
    <name type="scientific">Angiopteris evecta</name>
    <name type="common">Mule's foot fern</name>
    <name type="synonym">Polypodium evectum</name>
    <dbReference type="NCBI Taxonomy" id="13825"/>
    <lineage>
        <taxon>Eukaryota</taxon>
        <taxon>Viridiplantae</taxon>
        <taxon>Streptophyta</taxon>
        <taxon>Embryophyta</taxon>
        <taxon>Tracheophyta</taxon>
        <taxon>Polypodiopsida</taxon>
        <taxon>Marattiidae</taxon>
        <taxon>Marattiales</taxon>
        <taxon>Marattiaceae</taxon>
        <taxon>Angiopteris</taxon>
    </lineage>
</organism>